<name>MSRA_STRP8</name>
<gene>
    <name evidence="1" type="primary">msrA</name>
    <name type="ordered locus">spyM18_0509</name>
</gene>
<feature type="chain" id="PRO_0000138600" description="Peptide methionine sulfoxide reductase MsrA">
    <location>
        <begin position="1"/>
        <end position="169"/>
    </location>
</feature>
<feature type="active site" evidence="1">
    <location>
        <position position="10"/>
    </location>
</feature>
<accession>Q8P272</accession>
<protein>
    <recommendedName>
        <fullName evidence="1">Peptide methionine sulfoxide reductase MsrA</fullName>
        <shortName evidence="1">Protein-methionine-S-oxide reductase</shortName>
        <ecNumber evidence="1">1.8.4.11</ecNumber>
    </recommendedName>
    <alternativeName>
        <fullName evidence="1">Peptide-methionine (S)-S-oxide reductase</fullName>
        <shortName evidence="1">Peptide Met(O) reductase</shortName>
    </alternativeName>
</protein>
<keyword id="KW-0560">Oxidoreductase</keyword>
<dbReference type="EC" id="1.8.4.11" evidence="1"/>
<dbReference type="EMBL" id="AE009949">
    <property type="protein sequence ID" value="AAL97226.1"/>
    <property type="molecule type" value="Genomic_DNA"/>
</dbReference>
<dbReference type="RefSeq" id="WP_002985759.1">
    <property type="nucleotide sequence ID" value="NC_003485.1"/>
</dbReference>
<dbReference type="SMR" id="Q8P272"/>
<dbReference type="KEGG" id="spm:spyM18_0509"/>
<dbReference type="HOGENOM" id="CLU_031040_10_1_9"/>
<dbReference type="GO" id="GO:0033744">
    <property type="term" value="F:L-methionine:thioredoxin-disulfide S-oxidoreductase activity"/>
    <property type="evidence" value="ECO:0007669"/>
    <property type="project" value="RHEA"/>
</dbReference>
<dbReference type="GO" id="GO:0008113">
    <property type="term" value="F:peptide-methionine (S)-S-oxide reductase activity"/>
    <property type="evidence" value="ECO:0007669"/>
    <property type="project" value="UniProtKB-UniRule"/>
</dbReference>
<dbReference type="GO" id="GO:0036211">
    <property type="term" value="P:protein modification process"/>
    <property type="evidence" value="ECO:0007669"/>
    <property type="project" value="UniProtKB-UniRule"/>
</dbReference>
<dbReference type="Gene3D" id="3.30.1060.10">
    <property type="entry name" value="Peptide methionine sulphoxide reductase MsrA"/>
    <property type="match status" value="1"/>
</dbReference>
<dbReference type="HAMAP" id="MF_01401">
    <property type="entry name" value="MsrA"/>
    <property type="match status" value="1"/>
</dbReference>
<dbReference type="InterPro" id="IPR002569">
    <property type="entry name" value="Met_Sox_Rdtase_MsrA_dom"/>
</dbReference>
<dbReference type="InterPro" id="IPR036509">
    <property type="entry name" value="Met_Sox_Rdtase_MsrA_sf"/>
</dbReference>
<dbReference type="NCBIfam" id="TIGR00401">
    <property type="entry name" value="msrA"/>
    <property type="match status" value="1"/>
</dbReference>
<dbReference type="PANTHER" id="PTHR43774">
    <property type="entry name" value="PEPTIDE METHIONINE SULFOXIDE REDUCTASE"/>
    <property type="match status" value="1"/>
</dbReference>
<dbReference type="PANTHER" id="PTHR43774:SF1">
    <property type="entry name" value="PEPTIDE METHIONINE SULFOXIDE REDUCTASE MSRA 2"/>
    <property type="match status" value="1"/>
</dbReference>
<dbReference type="Pfam" id="PF01625">
    <property type="entry name" value="PMSR"/>
    <property type="match status" value="1"/>
</dbReference>
<dbReference type="SUPFAM" id="SSF55068">
    <property type="entry name" value="Peptide methionine sulfoxide reductase"/>
    <property type="match status" value="1"/>
</dbReference>
<sequence length="169" mass="19484">MERAIFAGGCFWCMVQPFEEQAGILSVRSGYTGGHLPNPSYEQVCAKTTGHTEAVEIIFDPEEISYKELVELYWAQTDPTDAFGQFEDRGDNYRPVIYYTTERQKEIAEQSKANLQASGRFDQPIVTTIEPAEPFYLAEDYHQGFYKKNPKRYAQSSAIRHQFLEENWS</sequence>
<evidence type="ECO:0000255" key="1">
    <source>
        <dbReference type="HAMAP-Rule" id="MF_01401"/>
    </source>
</evidence>
<comment type="function">
    <text evidence="1">Has an important function as a repair enzyme for proteins that have been inactivated by oxidation. Catalyzes the reversible oxidation-reduction of methionine sulfoxide in proteins to methionine.</text>
</comment>
<comment type="catalytic activity">
    <reaction evidence="1">
        <text>L-methionyl-[protein] + [thioredoxin]-disulfide + H2O = L-methionyl-(S)-S-oxide-[protein] + [thioredoxin]-dithiol</text>
        <dbReference type="Rhea" id="RHEA:14217"/>
        <dbReference type="Rhea" id="RHEA-COMP:10698"/>
        <dbReference type="Rhea" id="RHEA-COMP:10700"/>
        <dbReference type="Rhea" id="RHEA-COMP:12313"/>
        <dbReference type="Rhea" id="RHEA-COMP:12315"/>
        <dbReference type="ChEBI" id="CHEBI:15377"/>
        <dbReference type="ChEBI" id="CHEBI:16044"/>
        <dbReference type="ChEBI" id="CHEBI:29950"/>
        <dbReference type="ChEBI" id="CHEBI:44120"/>
        <dbReference type="ChEBI" id="CHEBI:50058"/>
        <dbReference type="EC" id="1.8.4.11"/>
    </reaction>
</comment>
<comment type="catalytic activity">
    <reaction evidence="1">
        <text>[thioredoxin]-disulfide + L-methionine + H2O = L-methionine (S)-S-oxide + [thioredoxin]-dithiol</text>
        <dbReference type="Rhea" id="RHEA:19993"/>
        <dbReference type="Rhea" id="RHEA-COMP:10698"/>
        <dbReference type="Rhea" id="RHEA-COMP:10700"/>
        <dbReference type="ChEBI" id="CHEBI:15377"/>
        <dbReference type="ChEBI" id="CHEBI:29950"/>
        <dbReference type="ChEBI" id="CHEBI:50058"/>
        <dbReference type="ChEBI" id="CHEBI:57844"/>
        <dbReference type="ChEBI" id="CHEBI:58772"/>
        <dbReference type="EC" id="1.8.4.11"/>
    </reaction>
</comment>
<comment type="similarity">
    <text evidence="1">Belongs to the MsrA Met sulfoxide reductase family.</text>
</comment>
<reference key="1">
    <citation type="journal article" date="2002" name="Proc. Natl. Acad. Sci. U.S.A.">
        <title>Genome sequence and comparative microarray analysis of serotype M18 group A Streptococcus strains associated with acute rheumatic fever outbreaks.</title>
        <authorList>
            <person name="Smoot J.C."/>
            <person name="Barbian K.D."/>
            <person name="Van Gompel J.J."/>
            <person name="Smoot L.M."/>
            <person name="Chaussee M.S."/>
            <person name="Sylva G.L."/>
            <person name="Sturdevant D.E."/>
            <person name="Ricklefs S.M."/>
            <person name="Porcella S.F."/>
            <person name="Parkins L.D."/>
            <person name="Beres S.B."/>
            <person name="Campbell D.S."/>
            <person name="Smith T.M."/>
            <person name="Zhang Q."/>
            <person name="Kapur V."/>
            <person name="Daly J.A."/>
            <person name="Veasy L.G."/>
            <person name="Musser J.M."/>
        </authorList>
    </citation>
    <scope>NUCLEOTIDE SEQUENCE [LARGE SCALE GENOMIC DNA]</scope>
    <source>
        <strain>MGAS8232</strain>
    </source>
</reference>
<organism>
    <name type="scientific">Streptococcus pyogenes serotype M18 (strain MGAS8232)</name>
    <dbReference type="NCBI Taxonomy" id="186103"/>
    <lineage>
        <taxon>Bacteria</taxon>
        <taxon>Bacillati</taxon>
        <taxon>Bacillota</taxon>
        <taxon>Bacilli</taxon>
        <taxon>Lactobacillales</taxon>
        <taxon>Streptococcaceae</taxon>
        <taxon>Streptococcus</taxon>
    </lineage>
</organism>
<proteinExistence type="inferred from homology"/>